<name>HN_PI3HW</name>
<organismHost>
    <name type="scientific">Homo sapiens</name>
    <name type="common">Human</name>
    <dbReference type="NCBI Taxonomy" id="9606"/>
</organismHost>
<sequence>MEYWKHTNHGKDAGNELETSMATHGNKLTNKIIYILWTIILVLLSIVFIIVLINSIKSEKAHESLLQDINNEFMEITEKIQMASDNTNDLIQSGVNTRLLTIQSHVQNYIPISLTQQMSDLRKFISEITIRNDNQEVLPQRITHDVGIKPLNPDDFWRCTSGLPSLMKTPKIRLMPGPGLLAMPTTVDGCVRTPSLVINDLIYAYTSNLITRGCQDIGKSYQVLQIGTITVNSDLVPDLNPRISHTFNINDNRKSCSLALLNTDVYQLCSTPKVDERSDYASSGIEDIVLDIVNYDGSISTTRFKNNNISFDQPYAALYPSVGPGIYYKGKIIFLGYGGLEHPINENVICNTTGCPGKTQRDCNQASHSPWFSDRRMVNSIIVVDKGLNSIPKLKVWTISMRQNYWGSEGRLLLLGNKIYIYTRSTSWHSKLQLGIIDITDYSDIRIKWTWHNVLSRPGNNECPWGHSCPDGCITGVYTDAYPLNPTGSIVSSVILDSQKSRVNPVITYSTATERVNELAIRNRTLSAGYTTTSCITHYNKGYCFHIVEINQKSLNTFQPMLFKTEIPKSCS</sequence>
<evidence type="ECO:0000250" key="1"/>
<evidence type="ECO:0000250" key="2">
    <source>
        <dbReference type="UniProtKB" id="P04853"/>
    </source>
</evidence>
<evidence type="ECO:0000250" key="3">
    <source>
        <dbReference type="UniProtKB" id="Q91UL0"/>
    </source>
</evidence>
<evidence type="ECO:0000250" key="4">
    <source>
        <dbReference type="UniProtKB" id="Q9WAF5"/>
    </source>
</evidence>
<evidence type="ECO:0000255" key="5"/>
<evidence type="ECO:0000305" key="6"/>
<organism>
    <name type="scientific">Human parainfluenza 3 virus (strain Wash/641/79)</name>
    <name type="common">HPIV-3</name>
    <dbReference type="NCBI Taxonomy" id="11222"/>
    <lineage>
        <taxon>Viruses</taxon>
        <taxon>Riboviria</taxon>
        <taxon>Orthornavirae</taxon>
        <taxon>Negarnaviricota</taxon>
        <taxon>Haploviricotina</taxon>
        <taxon>Monjiviricetes</taxon>
        <taxon>Mononegavirales</taxon>
        <taxon>Paramyxoviridae</taxon>
        <taxon>Feraresvirinae</taxon>
        <taxon>Respirovirus</taxon>
        <taxon>Respirovirus pneumoniae</taxon>
    </lineage>
</organism>
<comment type="function">
    <text evidence="1">Attaches the virus to sialic acid-containing cell receptors and thereby initiating infection. Binding of HN protein to the receptor induces a conformational change that allows the F protein to trigger virion/cell membranes fusion (By similarity).</text>
</comment>
<comment type="function">
    <text evidence="1">Neuraminidase activity ensures the efficient spread of the virus by dissociating the mature virions from the neuraminic acid containing glycoproteins.</text>
</comment>
<comment type="catalytic activity">
    <reaction evidence="4">
        <text>Hydrolysis of alpha-(2-&gt;3)-, alpha-(2-&gt;6)-, alpha-(2-&gt;8)- glycosidic linkages of terminal sialic acid residues in oligosaccharides, glycoproteins, glycolipids, colominic acid and synthetic substrates.</text>
        <dbReference type="EC" id="3.2.1.18"/>
    </reaction>
</comment>
<comment type="subunit">
    <text evidence="2 4">Homotetramer; composed of disulfide-linked homodimers (By similarity). Interacts with F protein trimer (By similarity).</text>
</comment>
<comment type="subcellular location">
    <subcellularLocation>
        <location evidence="6">Virion membrane</location>
        <topology evidence="6">Single-pass type II membrane protein</topology>
    </subcellularLocation>
    <subcellularLocation>
        <location evidence="6">Host cell membrane</location>
        <topology evidence="6">Single-pass type II membrane protein</topology>
    </subcellularLocation>
</comment>
<comment type="domain">
    <text evidence="4">The C-terminus (head domain) is involved in binding the cellular receptor.</text>
</comment>
<comment type="similarity">
    <text evidence="6">Belongs to the paramyxoviruses hemagglutinin-neuraminidase family.</text>
</comment>
<accession>P12565</accession>
<protein>
    <recommendedName>
        <fullName>Hemagglutinin-neuraminidase</fullName>
        <ecNumber evidence="4">3.2.1.18</ecNumber>
    </recommendedName>
</protein>
<gene>
    <name type="primary">HN</name>
</gene>
<keyword id="KW-1015">Disulfide bond</keyword>
<keyword id="KW-0325">Glycoprotein</keyword>
<keyword id="KW-0348">Hemagglutinin</keyword>
<keyword id="KW-1032">Host cell membrane</keyword>
<keyword id="KW-1043">Host membrane</keyword>
<keyword id="KW-0945">Host-virus interaction</keyword>
<keyword id="KW-0378">Hydrolase</keyword>
<keyword id="KW-0472">Membrane</keyword>
<keyword id="KW-0735">Signal-anchor</keyword>
<keyword id="KW-0812">Transmembrane</keyword>
<keyword id="KW-1133">Transmembrane helix</keyword>
<keyword id="KW-1161">Viral attachment to host cell</keyword>
<keyword id="KW-0261">Viral envelope protein</keyword>
<keyword id="KW-0946">Virion</keyword>
<keyword id="KW-1160">Virus entry into host cell</keyword>
<reference key="1">
    <citation type="journal article" date="1988" name="Virology">
        <title>Nucleotide and deduced amino acid sequence of hemagglutinin-neuraminidase genes of human type 3 parainfluenza viruses isolated from 1957 to 1983.</title>
        <authorList>
            <person name="van Wyke Coelingh K.L."/>
            <person name="Winter C.C."/>
            <person name="Murphy B.R."/>
        </authorList>
    </citation>
    <scope>NUCLEOTIDE SEQUENCE [GENOMIC RNA]</scope>
</reference>
<proteinExistence type="inferred from homology"/>
<dbReference type="EC" id="3.2.1.18" evidence="4"/>
<dbReference type="EMBL" id="M18761">
    <property type="protein sequence ID" value="AAA46848.1"/>
    <property type="molecule type" value="Genomic_RNA"/>
</dbReference>
<dbReference type="PIR" id="C29970">
    <property type="entry name" value="HNNZ79"/>
</dbReference>
<dbReference type="SMR" id="P12565"/>
<dbReference type="CAZy" id="GH83">
    <property type="family name" value="Glycoside Hydrolase Family 83"/>
</dbReference>
<dbReference type="GlyCosmos" id="P12565">
    <property type="glycosylation" value="3 sites, No reported glycans"/>
</dbReference>
<dbReference type="GO" id="GO:0020002">
    <property type="term" value="C:host cell plasma membrane"/>
    <property type="evidence" value="ECO:0007669"/>
    <property type="project" value="UniProtKB-SubCell"/>
</dbReference>
<dbReference type="GO" id="GO:0016020">
    <property type="term" value="C:membrane"/>
    <property type="evidence" value="ECO:0007669"/>
    <property type="project" value="UniProtKB-KW"/>
</dbReference>
<dbReference type="GO" id="GO:0019031">
    <property type="term" value="C:viral envelope"/>
    <property type="evidence" value="ECO:0007669"/>
    <property type="project" value="UniProtKB-KW"/>
</dbReference>
<dbReference type="GO" id="GO:0055036">
    <property type="term" value="C:virion membrane"/>
    <property type="evidence" value="ECO:0007669"/>
    <property type="project" value="UniProtKB-SubCell"/>
</dbReference>
<dbReference type="GO" id="GO:0004308">
    <property type="term" value="F:exo-alpha-sialidase activity"/>
    <property type="evidence" value="ECO:0007669"/>
    <property type="project" value="UniProtKB-EC"/>
</dbReference>
<dbReference type="GO" id="GO:0046789">
    <property type="term" value="F:host cell surface receptor binding"/>
    <property type="evidence" value="ECO:0007669"/>
    <property type="project" value="InterPro"/>
</dbReference>
<dbReference type="GO" id="GO:0046718">
    <property type="term" value="P:symbiont entry into host cell"/>
    <property type="evidence" value="ECO:0007669"/>
    <property type="project" value="UniProtKB-KW"/>
</dbReference>
<dbReference type="GO" id="GO:0019062">
    <property type="term" value="P:virion attachment to host cell"/>
    <property type="evidence" value="ECO:0007669"/>
    <property type="project" value="UniProtKB-KW"/>
</dbReference>
<dbReference type="CDD" id="cd15469">
    <property type="entry name" value="HN"/>
    <property type="match status" value="1"/>
</dbReference>
<dbReference type="Gene3D" id="2.120.10.10">
    <property type="match status" value="1"/>
</dbReference>
<dbReference type="InterPro" id="IPR016285">
    <property type="entry name" value="Hemagglutn-neuramid"/>
</dbReference>
<dbReference type="InterPro" id="IPR000665">
    <property type="entry name" value="Hemagglutn/HN"/>
</dbReference>
<dbReference type="InterPro" id="IPR036278">
    <property type="entry name" value="Sialidase_sf"/>
</dbReference>
<dbReference type="Pfam" id="PF00423">
    <property type="entry name" value="HN"/>
    <property type="match status" value="1"/>
</dbReference>
<dbReference type="PIRSF" id="PIRSF001072">
    <property type="entry name" value="Hemagglut-neuramid_paramyxoV"/>
    <property type="match status" value="1"/>
</dbReference>
<dbReference type="SUPFAM" id="SSF50939">
    <property type="entry name" value="Sialidases"/>
    <property type="match status" value="1"/>
</dbReference>
<feature type="chain" id="PRO_0000142630" description="Hemagglutinin-neuraminidase">
    <location>
        <begin position="1"/>
        <end position="572"/>
    </location>
</feature>
<feature type="topological domain" description="Intravirion" evidence="5">
    <location>
        <begin position="1"/>
        <end position="31"/>
    </location>
</feature>
<feature type="transmembrane region" description="Helical" evidence="5">
    <location>
        <begin position="32"/>
        <end position="52"/>
    </location>
</feature>
<feature type="topological domain" description="Virion surface" evidence="5">
    <location>
        <begin position="53"/>
        <end position="572"/>
    </location>
</feature>
<feature type="region of interest" description="Involved in neuraminidase activity" evidence="3">
    <location>
        <begin position="252"/>
        <end position="257"/>
    </location>
</feature>
<feature type="glycosylation site" description="N-linked (GlcNAc...) asparagine; by host" evidence="5">
    <location>
        <position position="308"/>
    </location>
</feature>
<feature type="glycosylation site" description="N-linked (GlcNAc...) asparagine; by host" evidence="5">
    <location>
        <position position="351"/>
    </location>
</feature>
<feature type="glycosylation site" description="N-linked (GlcNAc...) asparagine; by host" evidence="5">
    <location>
        <position position="523"/>
    </location>
</feature>
<feature type="disulfide bond" evidence="4">
    <location>
        <begin position="190"/>
        <end position="214"/>
    </location>
</feature>
<feature type="disulfide bond" evidence="4">
    <location>
        <begin position="256"/>
        <end position="269"/>
    </location>
</feature>
<feature type="disulfide bond" evidence="4">
    <location>
        <begin position="355"/>
        <end position="469"/>
    </location>
</feature>
<feature type="disulfide bond" evidence="4">
    <location>
        <begin position="463"/>
        <end position="473"/>
    </location>
</feature>
<feature type="disulfide bond" evidence="4">
    <location>
        <begin position="535"/>
        <end position="544"/>
    </location>
</feature>